<comment type="catalytic activity">
    <reaction evidence="1">
        <text>2-formamido-N(1)-(5-O-phospho-beta-D-ribosyl)acetamidine + ATP = 5-amino-1-(5-phospho-beta-D-ribosyl)imidazole + ADP + phosphate + H(+)</text>
        <dbReference type="Rhea" id="RHEA:23032"/>
        <dbReference type="ChEBI" id="CHEBI:15378"/>
        <dbReference type="ChEBI" id="CHEBI:30616"/>
        <dbReference type="ChEBI" id="CHEBI:43474"/>
        <dbReference type="ChEBI" id="CHEBI:137981"/>
        <dbReference type="ChEBI" id="CHEBI:147287"/>
        <dbReference type="ChEBI" id="CHEBI:456216"/>
        <dbReference type="EC" id="6.3.3.1"/>
    </reaction>
</comment>
<comment type="pathway">
    <text evidence="1">Purine metabolism; IMP biosynthesis via de novo pathway; 5-amino-1-(5-phospho-D-ribosyl)imidazole from N(2)-formyl-N(1)-(5-phospho-D-ribosyl)glycinamide: step 2/2.</text>
</comment>
<comment type="subcellular location">
    <subcellularLocation>
        <location evidence="1">Cytoplasm</location>
    </subcellularLocation>
</comment>
<comment type="similarity">
    <text evidence="1">Belongs to the AIR synthase family.</text>
</comment>
<dbReference type="EC" id="6.3.3.1" evidence="1"/>
<dbReference type="EMBL" id="CP001283">
    <property type="protein sequence ID" value="ACK91356.1"/>
    <property type="molecule type" value="Genomic_DNA"/>
</dbReference>
<dbReference type="RefSeq" id="WP_001262436.1">
    <property type="nucleotide sequence ID" value="NC_011773.1"/>
</dbReference>
<dbReference type="SMR" id="B7JM87"/>
<dbReference type="GeneID" id="45020355"/>
<dbReference type="KEGG" id="bcu:BCAH820_0328"/>
<dbReference type="HOGENOM" id="CLU_047116_0_0_9"/>
<dbReference type="UniPathway" id="UPA00074">
    <property type="reaction ID" value="UER00129"/>
</dbReference>
<dbReference type="Proteomes" id="UP000001363">
    <property type="component" value="Chromosome"/>
</dbReference>
<dbReference type="GO" id="GO:0005829">
    <property type="term" value="C:cytosol"/>
    <property type="evidence" value="ECO:0007669"/>
    <property type="project" value="TreeGrafter"/>
</dbReference>
<dbReference type="GO" id="GO:0005524">
    <property type="term" value="F:ATP binding"/>
    <property type="evidence" value="ECO:0007669"/>
    <property type="project" value="UniProtKB-KW"/>
</dbReference>
<dbReference type="GO" id="GO:0004637">
    <property type="term" value="F:phosphoribosylamine-glycine ligase activity"/>
    <property type="evidence" value="ECO:0007669"/>
    <property type="project" value="TreeGrafter"/>
</dbReference>
<dbReference type="GO" id="GO:0004641">
    <property type="term" value="F:phosphoribosylformylglycinamidine cyclo-ligase activity"/>
    <property type="evidence" value="ECO:0007669"/>
    <property type="project" value="UniProtKB-UniRule"/>
</dbReference>
<dbReference type="GO" id="GO:0006189">
    <property type="term" value="P:'de novo' IMP biosynthetic process"/>
    <property type="evidence" value="ECO:0007669"/>
    <property type="project" value="UniProtKB-UniRule"/>
</dbReference>
<dbReference type="GO" id="GO:0046084">
    <property type="term" value="P:adenine biosynthetic process"/>
    <property type="evidence" value="ECO:0007669"/>
    <property type="project" value="TreeGrafter"/>
</dbReference>
<dbReference type="CDD" id="cd02196">
    <property type="entry name" value="PurM"/>
    <property type="match status" value="1"/>
</dbReference>
<dbReference type="FunFam" id="3.30.1330.10:FF:000001">
    <property type="entry name" value="Phosphoribosylformylglycinamidine cyclo-ligase"/>
    <property type="match status" value="1"/>
</dbReference>
<dbReference type="FunFam" id="3.90.650.10:FF:000001">
    <property type="entry name" value="Phosphoribosylformylglycinamidine cyclo-ligase"/>
    <property type="match status" value="1"/>
</dbReference>
<dbReference type="Gene3D" id="3.90.650.10">
    <property type="entry name" value="PurM-like C-terminal domain"/>
    <property type="match status" value="1"/>
</dbReference>
<dbReference type="Gene3D" id="3.30.1330.10">
    <property type="entry name" value="PurM-like, N-terminal domain"/>
    <property type="match status" value="1"/>
</dbReference>
<dbReference type="HAMAP" id="MF_00741">
    <property type="entry name" value="AIRS"/>
    <property type="match status" value="1"/>
</dbReference>
<dbReference type="InterPro" id="IPR010918">
    <property type="entry name" value="PurM-like_C_dom"/>
</dbReference>
<dbReference type="InterPro" id="IPR036676">
    <property type="entry name" value="PurM-like_C_sf"/>
</dbReference>
<dbReference type="InterPro" id="IPR016188">
    <property type="entry name" value="PurM-like_N"/>
</dbReference>
<dbReference type="InterPro" id="IPR036921">
    <property type="entry name" value="PurM-like_N_sf"/>
</dbReference>
<dbReference type="InterPro" id="IPR004733">
    <property type="entry name" value="PurM_cligase"/>
</dbReference>
<dbReference type="NCBIfam" id="TIGR00878">
    <property type="entry name" value="purM"/>
    <property type="match status" value="1"/>
</dbReference>
<dbReference type="PANTHER" id="PTHR10520:SF12">
    <property type="entry name" value="TRIFUNCTIONAL PURINE BIOSYNTHETIC PROTEIN ADENOSINE-3"/>
    <property type="match status" value="1"/>
</dbReference>
<dbReference type="PANTHER" id="PTHR10520">
    <property type="entry name" value="TRIFUNCTIONAL PURINE BIOSYNTHETIC PROTEIN ADENOSINE-3-RELATED"/>
    <property type="match status" value="1"/>
</dbReference>
<dbReference type="Pfam" id="PF00586">
    <property type="entry name" value="AIRS"/>
    <property type="match status" value="1"/>
</dbReference>
<dbReference type="Pfam" id="PF02769">
    <property type="entry name" value="AIRS_C"/>
    <property type="match status" value="1"/>
</dbReference>
<dbReference type="SUPFAM" id="SSF56042">
    <property type="entry name" value="PurM C-terminal domain-like"/>
    <property type="match status" value="1"/>
</dbReference>
<dbReference type="SUPFAM" id="SSF55326">
    <property type="entry name" value="PurM N-terminal domain-like"/>
    <property type="match status" value="1"/>
</dbReference>
<evidence type="ECO:0000255" key="1">
    <source>
        <dbReference type="HAMAP-Rule" id="MF_00741"/>
    </source>
</evidence>
<protein>
    <recommendedName>
        <fullName evidence="1">Phosphoribosylformylglycinamidine cyclo-ligase</fullName>
        <ecNumber evidence="1">6.3.3.1</ecNumber>
    </recommendedName>
    <alternativeName>
        <fullName evidence="1">AIR synthase</fullName>
    </alternativeName>
    <alternativeName>
        <fullName evidence="1">AIRS</fullName>
    </alternativeName>
    <alternativeName>
        <fullName evidence="1">Phosphoribosyl-aminoimidazole synthetase</fullName>
    </alternativeName>
</protein>
<name>PUR5_BACC0</name>
<gene>
    <name evidence="1" type="primary">purM</name>
    <name type="ordered locus">BCAH820_0328</name>
</gene>
<feature type="chain" id="PRO_1000192993" description="Phosphoribosylformylglycinamidine cyclo-ligase">
    <location>
        <begin position="1"/>
        <end position="346"/>
    </location>
</feature>
<reference key="1">
    <citation type="submission" date="2008-10" db="EMBL/GenBank/DDBJ databases">
        <title>Genome sequence of Bacillus cereus AH820.</title>
        <authorList>
            <person name="Dodson R.J."/>
            <person name="Durkin A.S."/>
            <person name="Rosovitz M.J."/>
            <person name="Rasko D.A."/>
            <person name="Hoffmaster A."/>
            <person name="Ravel J."/>
            <person name="Sutton G."/>
        </authorList>
    </citation>
    <scope>NUCLEOTIDE SEQUENCE [LARGE SCALE GENOMIC DNA]</scope>
    <source>
        <strain>AH820</strain>
    </source>
</reference>
<keyword id="KW-0067">ATP-binding</keyword>
<keyword id="KW-0963">Cytoplasm</keyword>
<keyword id="KW-0436">Ligase</keyword>
<keyword id="KW-0547">Nucleotide-binding</keyword>
<keyword id="KW-0658">Purine biosynthesis</keyword>
<sequence length="346" mass="37256">MANAYKQAGVDIEAGYEAVSRMKKHVQTTMRKEVLGGLGGFGGMFDLSKFALEEPVLVSGTDGVGTKLMLAFMADKHDTIGIDAVAMCVNDIVVQGAEPLFFLDYIACGKAEPSKIENIVKGISEGCRQAGCALIGGETAEMPGMYSTEEYDLAGFTVGIVDKKKIVTGEKIEAGHVLIGLASSGIHSNGYSLVRKVLLEDGELSLDRIYGRLELPLGEELLKPTKIYVKPILELLKNHEVYGMAHITGGGFIENIPRMLPEGIGAEIELGSWKIQPIFSLLQEVGKLEEKEMFNIFNMGIGMVVAVKEEDAKDIVRLLEEQGETARIIGRTVQGAGVTFNGGKAL</sequence>
<accession>B7JM87</accession>
<proteinExistence type="inferred from homology"/>
<organism>
    <name type="scientific">Bacillus cereus (strain AH820)</name>
    <dbReference type="NCBI Taxonomy" id="405535"/>
    <lineage>
        <taxon>Bacteria</taxon>
        <taxon>Bacillati</taxon>
        <taxon>Bacillota</taxon>
        <taxon>Bacilli</taxon>
        <taxon>Bacillales</taxon>
        <taxon>Bacillaceae</taxon>
        <taxon>Bacillus</taxon>
        <taxon>Bacillus cereus group</taxon>
    </lineage>
</organism>